<name>RIMM_CUPMC</name>
<keyword id="KW-0143">Chaperone</keyword>
<keyword id="KW-0963">Cytoplasm</keyword>
<keyword id="KW-1185">Reference proteome</keyword>
<keyword id="KW-0690">Ribosome biogenesis</keyword>
<keyword id="KW-0698">rRNA processing</keyword>
<sequence>MTGNASGRKPLNLAATQGGASGRQKKLPAALLFTDTLPDDLVEVGYVGAAYGIRGWIKVQPHADDASALLHARRWWLLRAPPAGVVSAPAQSAEAVSIKISQSREHSGTVVAQPAGVSDRSVAEMLKGRRVWVRRADFPAAEEGEFYWVDLIGCAVVNEQGEALGEVTGLIDNGAHQILQVAYELPDGKAAERLIPFVDAFLRTVDTPARRIVVDWGLDY</sequence>
<gene>
    <name evidence="1" type="primary">rimM</name>
    <name type="ordered locus">Rmet_0749</name>
</gene>
<reference key="1">
    <citation type="journal article" date="2010" name="PLoS ONE">
        <title>The complete genome sequence of Cupriavidus metallidurans strain CH34, a master survivalist in harsh and anthropogenic environments.</title>
        <authorList>
            <person name="Janssen P.J."/>
            <person name="Van Houdt R."/>
            <person name="Moors H."/>
            <person name="Monsieurs P."/>
            <person name="Morin N."/>
            <person name="Michaux A."/>
            <person name="Benotmane M.A."/>
            <person name="Leys N."/>
            <person name="Vallaeys T."/>
            <person name="Lapidus A."/>
            <person name="Monchy S."/>
            <person name="Medigue C."/>
            <person name="Taghavi S."/>
            <person name="McCorkle S."/>
            <person name="Dunn J."/>
            <person name="van der Lelie D."/>
            <person name="Mergeay M."/>
        </authorList>
    </citation>
    <scope>NUCLEOTIDE SEQUENCE [LARGE SCALE GENOMIC DNA]</scope>
    <source>
        <strain>ATCC 43123 / DSM 2839 / NBRC 102507 / CH34</strain>
    </source>
</reference>
<comment type="function">
    <text evidence="1">An accessory protein needed during the final step in the assembly of 30S ribosomal subunit, possibly for assembly of the head region. Essential for efficient processing of 16S rRNA. May be needed both before and after RbfA during the maturation of 16S rRNA. It has affinity for free ribosomal 30S subunits but not for 70S ribosomes.</text>
</comment>
<comment type="subunit">
    <text evidence="1">Binds ribosomal protein uS19.</text>
</comment>
<comment type="subcellular location">
    <subcellularLocation>
        <location evidence="1">Cytoplasm</location>
    </subcellularLocation>
</comment>
<comment type="domain">
    <text evidence="1">The PRC barrel domain binds ribosomal protein uS19.</text>
</comment>
<comment type="similarity">
    <text evidence="1">Belongs to the RimM family.</text>
</comment>
<dbReference type="EMBL" id="CP000352">
    <property type="protein sequence ID" value="ABF07635.1"/>
    <property type="molecule type" value="Genomic_DNA"/>
</dbReference>
<dbReference type="RefSeq" id="WP_011515591.1">
    <property type="nucleotide sequence ID" value="NC_007973.1"/>
</dbReference>
<dbReference type="SMR" id="Q1LQE1"/>
<dbReference type="STRING" id="266264.Rmet_0749"/>
<dbReference type="KEGG" id="rme:Rmet_0749"/>
<dbReference type="eggNOG" id="COG0806">
    <property type="taxonomic scope" value="Bacteria"/>
</dbReference>
<dbReference type="HOGENOM" id="CLU_077636_1_0_4"/>
<dbReference type="Proteomes" id="UP000002429">
    <property type="component" value="Chromosome"/>
</dbReference>
<dbReference type="GO" id="GO:0005737">
    <property type="term" value="C:cytoplasm"/>
    <property type="evidence" value="ECO:0007669"/>
    <property type="project" value="UniProtKB-SubCell"/>
</dbReference>
<dbReference type="GO" id="GO:0005840">
    <property type="term" value="C:ribosome"/>
    <property type="evidence" value="ECO:0007669"/>
    <property type="project" value="InterPro"/>
</dbReference>
<dbReference type="GO" id="GO:0043022">
    <property type="term" value="F:ribosome binding"/>
    <property type="evidence" value="ECO:0007669"/>
    <property type="project" value="InterPro"/>
</dbReference>
<dbReference type="GO" id="GO:0042274">
    <property type="term" value="P:ribosomal small subunit biogenesis"/>
    <property type="evidence" value="ECO:0007669"/>
    <property type="project" value="UniProtKB-UniRule"/>
</dbReference>
<dbReference type="GO" id="GO:0006364">
    <property type="term" value="P:rRNA processing"/>
    <property type="evidence" value="ECO:0007669"/>
    <property type="project" value="UniProtKB-UniRule"/>
</dbReference>
<dbReference type="Gene3D" id="2.30.30.240">
    <property type="entry name" value="PRC-barrel domain"/>
    <property type="match status" value="1"/>
</dbReference>
<dbReference type="Gene3D" id="2.40.30.60">
    <property type="entry name" value="RimM"/>
    <property type="match status" value="1"/>
</dbReference>
<dbReference type="HAMAP" id="MF_00014">
    <property type="entry name" value="Ribosome_mat_RimM"/>
    <property type="match status" value="1"/>
</dbReference>
<dbReference type="InterPro" id="IPR011033">
    <property type="entry name" value="PRC_barrel-like_sf"/>
</dbReference>
<dbReference type="InterPro" id="IPR056792">
    <property type="entry name" value="PRC_RimM"/>
</dbReference>
<dbReference type="InterPro" id="IPR011961">
    <property type="entry name" value="RimM"/>
</dbReference>
<dbReference type="InterPro" id="IPR002676">
    <property type="entry name" value="RimM_N"/>
</dbReference>
<dbReference type="InterPro" id="IPR036976">
    <property type="entry name" value="RimM_N_sf"/>
</dbReference>
<dbReference type="InterPro" id="IPR009000">
    <property type="entry name" value="Transl_B-barrel_sf"/>
</dbReference>
<dbReference type="NCBIfam" id="TIGR02273">
    <property type="entry name" value="16S_RimM"/>
    <property type="match status" value="1"/>
</dbReference>
<dbReference type="PANTHER" id="PTHR33692">
    <property type="entry name" value="RIBOSOME MATURATION FACTOR RIMM"/>
    <property type="match status" value="1"/>
</dbReference>
<dbReference type="PANTHER" id="PTHR33692:SF1">
    <property type="entry name" value="RIBOSOME MATURATION FACTOR RIMM"/>
    <property type="match status" value="1"/>
</dbReference>
<dbReference type="Pfam" id="PF24986">
    <property type="entry name" value="PRC_RimM"/>
    <property type="match status" value="1"/>
</dbReference>
<dbReference type="Pfam" id="PF01782">
    <property type="entry name" value="RimM"/>
    <property type="match status" value="1"/>
</dbReference>
<dbReference type="SUPFAM" id="SSF50346">
    <property type="entry name" value="PRC-barrel domain"/>
    <property type="match status" value="1"/>
</dbReference>
<dbReference type="SUPFAM" id="SSF50447">
    <property type="entry name" value="Translation proteins"/>
    <property type="match status" value="1"/>
</dbReference>
<protein>
    <recommendedName>
        <fullName evidence="1">Ribosome maturation factor RimM</fullName>
    </recommendedName>
</protein>
<accession>Q1LQE1</accession>
<evidence type="ECO:0000255" key="1">
    <source>
        <dbReference type="HAMAP-Rule" id="MF_00014"/>
    </source>
</evidence>
<feature type="chain" id="PRO_0000351789" description="Ribosome maturation factor RimM">
    <location>
        <begin position="1"/>
        <end position="220"/>
    </location>
</feature>
<feature type="domain" description="PRC barrel" evidence="1">
    <location>
        <begin position="143"/>
        <end position="220"/>
    </location>
</feature>
<proteinExistence type="inferred from homology"/>
<organism>
    <name type="scientific">Cupriavidus metallidurans (strain ATCC 43123 / DSM 2839 / NBRC 102507 / CH34)</name>
    <name type="common">Ralstonia metallidurans</name>
    <dbReference type="NCBI Taxonomy" id="266264"/>
    <lineage>
        <taxon>Bacteria</taxon>
        <taxon>Pseudomonadati</taxon>
        <taxon>Pseudomonadota</taxon>
        <taxon>Betaproteobacteria</taxon>
        <taxon>Burkholderiales</taxon>
        <taxon>Burkholderiaceae</taxon>
        <taxon>Cupriavidus</taxon>
    </lineage>
</organism>